<feature type="chain" id="PRO_0000183534" description="Cytochrome c oxidase subunit 2">
    <location>
        <begin position="1"/>
        <end position="227"/>
    </location>
</feature>
<feature type="topological domain" description="Mitochondrial intermembrane" evidence="4">
    <location>
        <begin position="1"/>
        <end position="14"/>
    </location>
</feature>
<feature type="transmembrane region" description="Helical; Name=I" evidence="4">
    <location>
        <begin position="15"/>
        <end position="45"/>
    </location>
</feature>
<feature type="topological domain" description="Mitochondrial matrix" evidence="4">
    <location>
        <begin position="46"/>
        <end position="59"/>
    </location>
</feature>
<feature type="transmembrane region" description="Helical; Name=II" evidence="4">
    <location>
        <begin position="60"/>
        <end position="87"/>
    </location>
</feature>
<feature type="topological domain" description="Mitochondrial intermembrane" evidence="4">
    <location>
        <begin position="88"/>
        <end position="227"/>
    </location>
</feature>
<feature type="binding site" evidence="4">
    <location>
        <position position="161"/>
    </location>
    <ligand>
        <name>Cu cation</name>
        <dbReference type="ChEBI" id="CHEBI:23378"/>
        <label>A1</label>
    </ligand>
</feature>
<feature type="binding site" evidence="4">
    <location>
        <position position="196"/>
    </location>
    <ligand>
        <name>Cu cation</name>
        <dbReference type="ChEBI" id="CHEBI:23378"/>
        <label>A1</label>
    </ligand>
</feature>
<feature type="binding site" evidence="4">
    <location>
        <position position="196"/>
    </location>
    <ligand>
        <name>Cu cation</name>
        <dbReference type="ChEBI" id="CHEBI:23378"/>
        <label>A2</label>
    </ligand>
</feature>
<feature type="binding site" evidence="4">
    <location>
        <position position="198"/>
    </location>
    <ligand>
        <name>Cu cation</name>
        <dbReference type="ChEBI" id="CHEBI:23378"/>
        <label>A2</label>
    </ligand>
</feature>
<feature type="binding site" evidence="4">
    <location>
        <position position="198"/>
    </location>
    <ligand>
        <name>Mg(2+)</name>
        <dbReference type="ChEBI" id="CHEBI:18420"/>
        <note>ligand shared with MT-CO1</note>
    </ligand>
</feature>
<feature type="binding site" evidence="4">
    <location>
        <position position="200"/>
    </location>
    <ligand>
        <name>Cu cation</name>
        <dbReference type="ChEBI" id="CHEBI:23378"/>
        <label>A1</label>
    </ligand>
</feature>
<feature type="binding site" evidence="4">
    <location>
        <position position="200"/>
    </location>
    <ligand>
        <name>Cu cation</name>
        <dbReference type="ChEBI" id="CHEBI:23378"/>
        <label>A2</label>
    </ligand>
</feature>
<feature type="binding site" evidence="4">
    <location>
        <position position="204"/>
    </location>
    <ligand>
        <name>Cu cation</name>
        <dbReference type="ChEBI" id="CHEBI:23378"/>
        <label>A2</label>
    </ligand>
</feature>
<feature type="binding site" evidence="4">
    <location>
        <position position="207"/>
    </location>
    <ligand>
        <name>Cu cation</name>
        <dbReference type="ChEBI" id="CHEBI:23378"/>
        <label>A1</label>
    </ligand>
</feature>
<feature type="modified residue" description="Phosphotyrosine" evidence="2">
    <location>
        <position position="218"/>
    </location>
</feature>
<geneLocation type="mitochondrion"/>
<organism>
    <name type="scientific">Canis lupus</name>
    <name type="common">Gray wolf</name>
    <dbReference type="NCBI Taxonomy" id="9612"/>
    <lineage>
        <taxon>Eukaryota</taxon>
        <taxon>Metazoa</taxon>
        <taxon>Chordata</taxon>
        <taxon>Craniata</taxon>
        <taxon>Vertebrata</taxon>
        <taxon>Euteleostomi</taxon>
        <taxon>Mammalia</taxon>
        <taxon>Eutheria</taxon>
        <taxon>Laurasiatheria</taxon>
        <taxon>Carnivora</taxon>
        <taxon>Caniformia</taxon>
        <taxon>Canidae</taxon>
        <taxon>Canis</taxon>
    </lineage>
</organism>
<protein>
    <recommendedName>
        <fullName>Cytochrome c oxidase subunit 2</fullName>
        <ecNumber>7.1.1.9</ecNumber>
    </recommendedName>
    <alternativeName>
        <fullName>Cytochrome c oxidase polypeptide II</fullName>
    </alternativeName>
</protein>
<reference key="1">
    <citation type="journal article" date="1997" name="Syst. Biol.">
        <title>Molecular systematics of the Canidae.</title>
        <authorList>
            <person name="Wayne R.K."/>
            <person name="Geffen E."/>
            <person name="Girman D.J."/>
            <person name="Koepfli K.-P."/>
            <person name="Lau L.M."/>
            <person name="Marshall C.R."/>
        </authorList>
    </citation>
    <scope>NUCLEOTIDE SEQUENCE [GENOMIC DNA]</scope>
</reference>
<reference key="2">
    <citation type="journal article" date="2005" name="Mol. Biol. Evol.">
        <title>Isolation and molecular evolution of the selenocysteine tRNA (Cf TRSP) and RNase P RNA (Cf RPPH1) genes in the dog family, Canidae.</title>
        <authorList>
            <person name="Bardeleben C."/>
            <person name="Moore R.L."/>
            <person name="Wayne R.K."/>
        </authorList>
    </citation>
    <scope>NUCLEOTIDE SEQUENCE [GENOMIC DNA]</scope>
</reference>
<reference key="3">
    <citation type="journal article" date="2005" name="Mol. Phylogenet. Evol.">
        <title>A phylogeny of the Caniformia (order Carnivora) based on 12 complete protein-coding mitochondrial genes.</title>
        <authorList>
            <person name="Delisle I."/>
            <person name="Strobeck C."/>
        </authorList>
    </citation>
    <scope>NUCLEOTIDE SEQUENCE [GENOMIC DNA]</scope>
</reference>
<reference key="4">
    <citation type="journal article" date="2006" name="Genome Res.">
        <title>Relaxation of selective constraint on dog mitochondrial DNA following domestication.</title>
        <authorList>
            <person name="Bjornerfeldt S."/>
            <person name="Webster M.T."/>
            <person name="Vila C."/>
        </authorList>
    </citation>
    <scope>NUCLEOTIDE SEQUENCE [GENOMIC DNA]</scope>
</reference>
<evidence type="ECO:0000250" key="1">
    <source>
        <dbReference type="UniProtKB" id="P00403"/>
    </source>
</evidence>
<evidence type="ECO:0000250" key="2">
    <source>
        <dbReference type="UniProtKB" id="P00406"/>
    </source>
</evidence>
<evidence type="ECO:0000250" key="3">
    <source>
        <dbReference type="UniProtKB" id="P00410"/>
    </source>
</evidence>
<evidence type="ECO:0000250" key="4">
    <source>
        <dbReference type="UniProtKB" id="P68530"/>
    </source>
</evidence>
<evidence type="ECO:0000305" key="5"/>
<name>COX2_CANLU</name>
<sequence>MAYPFQLGLQDATSPIMEELLHFHDHTLMIVFLISSLVLYIISLMLTTKLTHTSTMDAQEVETVWTILPAIILILIALPSLRILYMMDEINNPSLTVKTMGHQWYWSYEYTDYEDLNFDSYMIPTQELKPGELRLLEVDNRVVLPMEMTIRMLISSEDVLHSWAVPSLGLKTDAIPGRLNQTTLMAMRPGLYYGQCSEICGSNHSFMPIVLEMVPLSYFETWSALMV</sequence>
<accession>P67782</accession>
<accession>O48362</accession>
<accession>O63855</accession>
<accession>Q539D6</accession>
<dbReference type="EC" id="7.1.1.9"/>
<dbReference type="EMBL" id="AF028213">
    <property type="protein sequence ID" value="AAC00106.1"/>
    <property type="molecule type" value="Genomic_DNA"/>
</dbReference>
<dbReference type="EMBL" id="AY609146">
    <property type="protein sequence ID" value="AAU44798.1"/>
    <property type="molecule type" value="Genomic_DNA"/>
</dbReference>
<dbReference type="EMBL" id="AY598497">
    <property type="protein sequence ID" value="AAU00443.1"/>
    <property type="molecule type" value="Genomic_DNA"/>
</dbReference>
<dbReference type="EMBL" id="DQ480503">
    <property type="protein sequence ID" value="ABE48158.1"/>
    <property type="molecule type" value="Genomic_DNA"/>
</dbReference>
<dbReference type="EMBL" id="DQ480504">
    <property type="protein sequence ID" value="ABE48171.1"/>
    <property type="molecule type" value="Genomic_DNA"/>
</dbReference>
<dbReference type="EMBL" id="DQ480505">
    <property type="protein sequence ID" value="ABE48184.1"/>
    <property type="molecule type" value="Genomic_DNA"/>
</dbReference>
<dbReference type="EMBL" id="DQ480506">
    <property type="protein sequence ID" value="ABE48197.1"/>
    <property type="molecule type" value="Genomic_DNA"/>
</dbReference>
<dbReference type="EMBL" id="DQ480507">
    <property type="protein sequence ID" value="ABE48210.1"/>
    <property type="molecule type" value="Genomic_DNA"/>
</dbReference>
<dbReference type="EMBL" id="DQ480508">
    <property type="protein sequence ID" value="ABE48223.1"/>
    <property type="molecule type" value="Genomic_DNA"/>
</dbReference>
<dbReference type="RefSeq" id="YP_626731.1">
    <property type="nucleotide sequence ID" value="NC_008092.1"/>
</dbReference>
<dbReference type="SMR" id="P67782"/>
<dbReference type="GeneID" id="4097767"/>
<dbReference type="CTD" id="4513"/>
<dbReference type="GO" id="GO:0005743">
    <property type="term" value="C:mitochondrial inner membrane"/>
    <property type="evidence" value="ECO:0007669"/>
    <property type="project" value="UniProtKB-SubCell"/>
</dbReference>
<dbReference type="GO" id="GO:0045277">
    <property type="term" value="C:respiratory chain complex IV"/>
    <property type="evidence" value="ECO:0000250"/>
    <property type="project" value="UniProtKB"/>
</dbReference>
<dbReference type="GO" id="GO:0005507">
    <property type="term" value="F:copper ion binding"/>
    <property type="evidence" value="ECO:0007669"/>
    <property type="project" value="InterPro"/>
</dbReference>
<dbReference type="GO" id="GO:0004129">
    <property type="term" value="F:cytochrome-c oxidase activity"/>
    <property type="evidence" value="ECO:0007669"/>
    <property type="project" value="UniProtKB-EC"/>
</dbReference>
<dbReference type="GO" id="GO:0042773">
    <property type="term" value="P:ATP synthesis coupled electron transport"/>
    <property type="evidence" value="ECO:0007669"/>
    <property type="project" value="TreeGrafter"/>
</dbReference>
<dbReference type="CDD" id="cd13912">
    <property type="entry name" value="CcO_II_C"/>
    <property type="match status" value="1"/>
</dbReference>
<dbReference type="FunFam" id="1.10.287.90:FF:000001">
    <property type="entry name" value="Cytochrome c oxidase subunit 2"/>
    <property type="match status" value="1"/>
</dbReference>
<dbReference type="FunFam" id="2.60.40.420:FF:000001">
    <property type="entry name" value="Cytochrome c oxidase subunit 2"/>
    <property type="match status" value="1"/>
</dbReference>
<dbReference type="Gene3D" id="1.10.287.90">
    <property type="match status" value="1"/>
</dbReference>
<dbReference type="Gene3D" id="2.60.40.420">
    <property type="entry name" value="Cupredoxins - blue copper proteins"/>
    <property type="match status" value="1"/>
</dbReference>
<dbReference type="InterPro" id="IPR045187">
    <property type="entry name" value="CcO_II"/>
</dbReference>
<dbReference type="InterPro" id="IPR002429">
    <property type="entry name" value="CcO_II-like_C"/>
</dbReference>
<dbReference type="InterPro" id="IPR034210">
    <property type="entry name" value="CcO_II_C"/>
</dbReference>
<dbReference type="InterPro" id="IPR001505">
    <property type="entry name" value="Copper_CuA"/>
</dbReference>
<dbReference type="InterPro" id="IPR008972">
    <property type="entry name" value="Cupredoxin"/>
</dbReference>
<dbReference type="InterPro" id="IPR014222">
    <property type="entry name" value="Cyt_c_oxidase_su2"/>
</dbReference>
<dbReference type="InterPro" id="IPR011759">
    <property type="entry name" value="Cyt_c_oxidase_su2_TM_dom"/>
</dbReference>
<dbReference type="InterPro" id="IPR036257">
    <property type="entry name" value="Cyt_c_oxidase_su2_TM_sf"/>
</dbReference>
<dbReference type="NCBIfam" id="TIGR02866">
    <property type="entry name" value="CoxB"/>
    <property type="match status" value="1"/>
</dbReference>
<dbReference type="PANTHER" id="PTHR22888:SF9">
    <property type="entry name" value="CYTOCHROME C OXIDASE SUBUNIT 2"/>
    <property type="match status" value="1"/>
</dbReference>
<dbReference type="PANTHER" id="PTHR22888">
    <property type="entry name" value="CYTOCHROME C OXIDASE, SUBUNIT II"/>
    <property type="match status" value="1"/>
</dbReference>
<dbReference type="Pfam" id="PF00116">
    <property type="entry name" value="COX2"/>
    <property type="match status" value="1"/>
</dbReference>
<dbReference type="Pfam" id="PF02790">
    <property type="entry name" value="COX2_TM"/>
    <property type="match status" value="1"/>
</dbReference>
<dbReference type="PRINTS" id="PR01166">
    <property type="entry name" value="CYCOXIDASEII"/>
</dbReference>
<dbReference type="SUPFAM" id="SSF49503">
    <property type="entry name" value="Cupredoxins"/>
    <property type="match status" value="1"/>
</dbReference>
<dbReference type="SUPFAM" id="SSF81464">
    <property type="entry name" value="Cytochrome c oxidase subunit II-like, transmembrane region"/>
    <property type="match status" value="1"/>
</dbReference>
<dbReference type="PROSITE" id="PS00078">
    <property type="entry name" value="COX2"/>
    <property type="match status" value="1"/>
</dbReference>
<dbReference type="PROSITE" id="PS50857">
    <property type="entry name" value="COX2_CUA"/>
    <property type="match status" value="1"/>
</dbReference>
<dbReference type="PROSITE" id="PS50999">
    <property type="entry name" value="COX2_TM"/>
    <property type="match status" value="1"/>
</dbReference>
<comment type="function">
    <text evidence="3">Component of the cytochrome c oxidase, the last enzyme in the mitochondrial electron transport chain which drives oxidative phosphorylation. The respiratory chain contains 3 multisubunit complexes succinate dehydrogenase (complex II, CII), ubiquinol-cytochrome c oxidoreductase (cytochrome b-c1 complex, complex III, CIII) and cytochrome c oxidase (complex IV, CIV), that cooperate to transfer electrons derived from NADH and succinate to molecular oxygen, creating an electrochemical gradient over the inner membrane that drives transmembrane transport and the ATP synthase. Cytochrome c oxidase is the component of the respiratory chain that catalyzes the reduction of oxygen to water. Electrons originating from reduced cytochrome c in the intermembrane space (IMS) are transferred via the dinuclear copper A center (CU(A)) of subunit 2 and heme A of subunit 1 to the active site in subunit 1, a binuclear center (BNC) formed by heme A3 and copper B (CU(B)). The BNC reduces molecular oxygen to 2 water molecules using 4 electrons from cytochrome c in the IMS and 4 protons from the mitochondrial matrix.</text>
</comment>
<comment type="catalytic activity">
    <reaction evidence="3">
        <text>4 Fe(II)-[cytochrome c] + O2 + 8 H(+)(in) = 4 Fe(III)-[cytochrome c] + 2 H2O + 4 H(+)(out)</text>
        <dbReference type="Rhea" id="RHEA:11436"/>
        <dbReference type="Rhea" id="RHEA-COMP:10350"/>
        <dbReference type="Rhea" id="RHEA-COMP:14399"/>
        <dbReference type="ChEBI" id="CHEBI:15377"/>
        <dbReference type="ChEBI" id="CHEBI:15378"/>
        <dbReference type="ChEBI" id="CHEBI:15379"/>
        <dbReference type="ChEBI" id="CHEBI:29033"/>
        <dbReference type="ChEBI" id="CHEBI:29034"/>
        <dbReference type="EC" id="7.1.1.9"/>
    </reaction>
    <physiologicalReaction direction="left-to-right" evidence="3">
        <dbReference type="Rhea" id="RHEA:11437"/>
    </physiologicalReaction>
</comment>
<comment type="cofactor">
    <cofactor evidence="4">
        <name>Cu cation</name>
        <dbReference type="ChEBI" id="CHEBI:23378"/>
    </cofactor>
    <text evidence="4">Binds a dinuclear copper A center per subunit.</text>
</comment>
<comment type="subunit">
    <text evidence="1 4">Component of the cytochrome c oxidase (complex IV, CIV), a multisubunit enzyme composed of 14 subunits. The complex is composed of a catalytic core of 3 subunits MT-CO1, MT-CO2 and MT-CO3, encoded in the mitochondrial DNA, and 11 supernumerary subunits COX4I, COX5A, COX5B, COX6A, COX6B, COX6C, COX7A, COX7B, COX7C, COX8 and NDUFA4, which are encoded in the nuclear genome. The complex exists as a monomer or a dimer and forms supercomplexes (SCs) in the inner mitochondrial membrane with NADH-ubiquinone oxidoreductase (complex I, CI) and ubiquinol-cytochrome c oxidoreductase (cytochrome b-c1 complex, complex III, CIII), resulting in different assemblies (supercomplex SCI(1)III(2)IV(1) and megacomplex MCI(2)III(2)IV(2)) (By similarity). Found in a complex with TMEM177, COA6, COX18, COX20, SCO1 and SCO2. Interacts with TMEM177 in a COX20-dependent manner. Interacts with COX20. Interacts with COX16 (By similarity).</text>
</comment>
<comment type="subcellular location">
    <subcellularLocation>
        <location evidence="4">Mitochondrion inner membrane</location>
        <topology evidence="4">Multi-pass membrane protein</topology>
    </subcellularLocation>
</comment>
<comment type="similarity">
    <text evidence="5">Belongs to the cytochrome c oxidase subunit 2 family.</text>
</comment>
<keyword id="KW-0186">Copper</keyword>
<keyword id="KW-0249">Electron transport</keyword>
<keyword id="KW-0460">Magnesium</keyword>
<keyword id="KW-0472">Membrane</keyword>
<keyword id="KW-0479">Metal-binding</keyword>
<keyword id="KW-0496">Mitochondrion</keyword>
<keyword id="KW-0999">Mitochondrion inner membrane</keyword>
<keyword id="KW-0597">Phosphoprotein</keyword>
<keyword id="KW-0679">Respiratory chain</keyword>
<keyword id="KW-1278">Translocase</keyword>
<keyword id="KW-0812">Transmembrane</keyword>
<keyword id="KW-1133">Transmembrane helix</keyword>
<keyword id="KW-0813">Transport</keyword>
<proteinExistence type="inferred from homology"/>
<gene>
    <name type="primary">MT-CO2</name>
    <name type="synonym">COII</name>
    <name type="synonym">COX2</name>
    <name type="synonym">COXII</name>
    <name type="synonym">MTCO2</name>
</gene>